<organism>
    <name type="scientific">Rattus norvegicus</name>
    <name type="common">Rat</name>
    <dbReference type="NCBI Taxonomy" id="10116"/>
    <lineage>
        <taxon>Eukaryota</taxon>
        <taxon>Metazoa</taxon>
        <taxon>Chordata</taxon>
        <taxon>Craniata</taxon>
        <taxon>Vertebrata</taxon>
        <taxon>Euteleostomi</taxon>
        <taxon>Mammalia</taxon>
        <taxon>Eutheria</taxon>
        <taxon>Euarchontoglires</taxon>
        <taxon>Glires</taxon>
        <taxon>Rodentia</taxon>
        <taxon>Myomorpha</taxon>
        <taxon>Muroidea</taxon>
        <taxon>Muridae</taxon>
        <taxon>Murinae</taxon>
        <taxon>Rattus</taxon>
    </lineage>
</organism>
<reference key="1">
    <citation type="journal article" date="1996" name="Br. J. Pharmacol.">
        <title>Rat proteinase-activated receptor-2 (PAR-2): cDNA sequence and activity of receptor-derived peptides in gastric and vascular tissue.</title>
        <authorList>
            <person name="Saifeddine M."/>
            <person name="Al-Ani B."/>
            <person name="Cheng C.H."/>
            <person name="Wang L."/>
            <person name="Hollenberg M.D."/>
        </authorList>
    </citation>
    <scope>NUCLEOTIDE SEQUENCE [MRNA]</scope>
    <source>
        <strain>Sprague-Dawley</strain>
        <tissue>Intestine</tissue>
        <tissue>Kidney</tissue>
    </source>
</reference>
<reference key="2">
    <citation type="journal article" date="2004" name="Genome Res.">
        <title>The status, quality, and expansion of the NIH full-length cDNA project: the Mammalian Gene Collection (MGC).</title>
        <authorList>
            <consortium name="The MGC Project Team"/>
        </authorList>
    </citation>
    <scope>NUCLEOTIDE SEQUENCE [LARGE SCALE MRNA]</scope>
    <source>
        <tissue>Prostate</tissue>
    </source>
</reference>
<reference key="3">
    <citation type="journal article" date="2002" name="Circ. Res.">
        <title>Protease-activated receptor-2 activation causes EDHF-like coronary vasodilation: selective preservation in ischemia/reperfusion injury: involvement of lipoxygenase products, VR1 receptors, and C-fibers.</title>
        <authorList>
            <person name="McLean P.G."/>
            <person name="Aston D."/>
            <person name="Sarkar D."/>
            <person name="Ahluwalia A."/>
        </authorList>
    </citation>
    <scope>FUNCTION</scope>
</reference>
<reference key="4">
    <citation type="journal article" date="2007" name="J. Biol. Chem.">
        <title>p24A, a type I transmembrane protein, controls ARF1-dependent resensitization of protease-activated receptor-2 by influence on receptor trafficking.</title>
        <authorList>
            <person name="Luo W."/>
            <person name="Wang Y."/>
            <person name="Reiser G."/>
        </authorList>
    </citation>
    <scope>INTERACTION WITH TMED2</scope>
</reference>
<protein>
    <recommendedName>
        <fullName>Proteinase-activated receptor 2</fullName>
        <shortName>PAR-2</shortName>
    </recommendedName>
    <alternativeName>
        <fullName>Coagulation factor II receptor-like 1</fullName>
    </alternativeName>
    <alternativeName>
        <fullName>Thrombin receptor-like 1</fullName>
    </alternativeName>
</protein>
<dbReference type="EMBL" id="U61373">
    <property type="protein sequence ID" value="AAC52703.1"/>
    <property type="molecule type" value="mRNA"/>
</dbReference>
<dbReference type="EMBL" id="BC099765">
    <property type="protein sequence ID" value="AAH99765.1"/>
    <property type="molecule type" value="mRNA"/>
</dbReference>
<dbReference type="RefSeq" id="NP_446349.1">
    <property type="nucleotide sequence ID" value="NM_053897.3"/>
</dbReference>
<dbReference type="SMR" id="Q63645"/>
<dbReference type="BioGRID" id="250560">
    <property type="interactions" value="2"/>
</dbReference>
<dbReference type="FunCoup" id="Q63645">
    <property type="interactions" value="357"/>
</dbReference>
<dbReference type="IntAct" id="Q63645">
    <property type="interactions" value="2"/>
</dbReference>
<dbReference type="STRING" id="10116.ENSRNOP00000058298"/>
<dbReference type="BindingDB" id="Q63645"/>
<dbReference type="ChEMBL" id="CHEMBL2429706"/>
<dbReference type="GlyCosmos" id="Q63645">
    <property type="glycosylation" value="2 sites, No reported glycans"/>
</dbReference>
<dbReference type="GlyGen" id="Q63645">
    <property type="glycosylation" value="5 sites"/>
</dbReference>
<dbReference type="PhosphoSitePlus" id="Q63645"/>
<dbReference type="PaxDb" id="10116-ENSRNOP00000058298"/>
<dbReference type="ABCD" id="Q63645">
    <property type="antibodies" value="9 sequenced antibodies"/>
</dbReference>
<dbReference type="Ensembl" id="ENSRNOT00000061580.2">
    <property type="protein sequence ID" value="ENSRNOP00000058298.1"/>
    <property type="gene ID" value="ENSRNOG00000018003.7"/>
</dbReference>
<dbReference type="GeneID" id="116677"/>
<dbReference type="KEGG" id="rno:116677"/>
<dbReference type="UCSC" id="RGD:620866">
    <property type="organism name" value="rat"/>
</dbReference>
<dbReference type="AGR" id="RGD:620866"/>
<dbReference type="CTD" id="2150"/>
<dbReference type="RGD" id="620866">
    <property type="gene designation" value="F2rl1"/>
</dbReference>
<dbReference type="eggNOG" id="ENOG502QR8S">
    <property type="taxonomic scope" value="Eukaryota"/>
</dbReference>
<dbReference type="GeneTree" id="ENSGT01050000244840"/>
<dbReference type="HOGENOM" id="CLU_009579_8_2_1"/>
<dbReference type="InParanoid" id="Q63645"/>
<dbReference type="OMA" id="SQSHVYA"/>
<dbReference type="OrthoDB" id="9370401at2759"/>
<dbReference type="Reactome" id="R-RNO-375276">
    <property type="pathway name" value="Peptide ligand-binding receptors"/>
</dbReference>
<dbReference type="Reactome" id="R-RNO-416476">
    <property type="pathway name" value="G alpha (q) signalling events"/>
</dbReference>
<dbReference type="PRO" id="PR:Q63645"/>
<dbReference type="Proteomes" id="UP000002494">
    <property type="component" value="Chromosome 2"/>
</dbReference>
<dbReference type="Bgee" id="ENSRNOG00000018003">
    <property type="expression patterns" value="Expressed in jejunum and 17 other cell types or tissues"/>
</dbReference>
<dbReference type="GO" id="GO:0005769">
    <property type="term" value="C:early endosome"/>
    <property type="evidence" value="ECO:0000266"/>
    <property type="project" value="RGD"/>
</dbReference>
<dbReference type="GO" id="GO:0005886">
    <property type="term" value="C:plasma membrane"/>
    <property type="evidence" value="ECO:0000266"/>
    <property type="project" value="RGD"/>
</dbReference>
<dbReference type="GO" id="GO:0031143">
    <property type="term" value="C:pseudopodium"/>
    <property type="evidence" value="ECO:0000250"/>
    <property type="project" value="UniProtKB"/>
</dbReference>
<dbReference type="GO" id="GO:0004930">
    <property type="term" value="F:G protein-coupled receptor activity"/>
    <property type="evidence" value="ECO:0000250"/>
    <property type="project" value="UniProtKB"/>
</dbReference>
<dbReference type="GO" id="GO:0001965">
    <property type="term" value="F:G-protein alpha-subunit binding"/>
    <property type="evidence" value="ECO:0000250"/>
    <property type="project" value="UniProtKB"/>
</dbReference>
<dbReference type="GO" id="GO:0031681">
    <property type="term" value="F:G-protein beta-subunit binding"/>
    <property type="evidence" value="ECO:0000250"/>
    <property type="project" value="UniProtKB"/>
</dbReference>
<dbReference type="GO" id="GO:0002020">
    <property type="term" value="F:protease binding"/>
    <property type="evidence" value="ECO:0000266"/>
    <property type="project" value="RGD"/>
</dbReference>
<dbReference type="GO" id="GO:0001648">
    <property type="term" value="F:proteinase-activated receptor activity"/>
    <property type="evidence" value="ECO:0000266"/>
    <property type="project" value="RGD"/>
</dbReference>
<dbReference type="GO" id="GO:0015057">
    <property type="term" value="F:thrombin-activated receptor activity"/>
    <property type="evidence" value="ECO:0007669"/>
    <property type="project" value="InterPro"/>
</dbReference>
<dbReference type="GO" id="GO:0007596">
    <property type="term" value="P:blood coagulation"/>
    <property type="evidence" value="ECO:0007669"/>
    <property type="project" value="InterPro"/>
</dbReference>
<dbReference type="GO" id="GO:0045217">
    <property type="term" value="P:cell-cell junction maintenance"/>
    <property type="evidence" value="ECO:0000266"/>
    <property type="project" value="RGD"/>
</dbReference>
<dbReference type="GO" id="GO:0051607">
    <property type="term" value="P:defense response to virus"/>
    <property type="evidence" value="ECO:0000250"/>
    <property type="project" value="UniProtKB"/>
</dbReference>
<dbReference type="GO" id="GO:0061028">
    <property type="term" value="P:establishment of endothelial barrier"/>
    <property type="evidence" value="ECO:0000266"/>
    <property type="project" value="RGD"/>
</dbReference>
<dbReference type="GO" id="GO:0007186">
    <property type="term" value="P:G protein-coupled receptor signaling pathway"/>
    <property type="evidence" value="ECO:0000266"/>
    <property type="project" value="RGD"/>
</dbReference>
<dbReference type="GO" id="GO:0006954">
    <property type="term" value="P:inflammatory response"/>
    <property type="evidence" value="ECO:0007669"/>
    <property type="project" value="UniProtKB-KW"/>
</dbReference>
<dbReference type="GO" id="GO:0045087">
    <property type="term" value="P:innate immune response"/>
    <property type="evidence" value="ECO:0007669"/>
    <property type="project" value="UniProtKB-KW"/>
</dbReference>
<dbReference type="GO" id="GO:0050900">
    <property type="term" value="P:leukocyte migration"/>
    <property type="evidence" value="ECO:0000250"/>
    <property type="project" value="UniProtKB"/>
</dbReference>
<dbReference type="GO" id="GO:0070661">
    <property type="term" value="P:leukocyte proliferation"/>
    <property type="evidence" value="ECO:0000250"/>
    <property type="project" value="UniProtKB"/>
</dbReference>
<dbReference type="GO" id="GO:0097029">
    <property type="term" value="P:mature conventional dendritic cell differentiation"/>
    <property type="evidence" value="ECO:0000250"/>
    <property type="project" value="UniProtKB"/>
</dbReference>
<dbReference type="GO" id="GO:0032682">
    <property type="term" value="P:negative regulation of chemokine production"/>
    <property type="evidence" value="ECO:0000266"/>
    <property type="project" value="RGD"/>
</dbReference>
<dbReference type="GO" id="GO:0046676">
    <property type="term" value="P:negative regulation of insulin secretion"/>
    <property type="evidence" value="ECO:0000266"/>
    <property type="project" value="RGD"/>
</dbReference>
<dbReference type="GO" id="GO:0046329">
    <property type="term" value="P:negative regulation of JNK cascade"/>
    <property type="evidence" value="ECO:0000266"/>
    <property type="project" value="RGD"/>
</dbReference>
<dbReference type="GO" id="GO:0034140">
    <property type="term" value="P:negative regulation of toll-like receptor 3 signaling pathway"/>
    <property type="evidence" value="ECO:0000266"/>
    <property type="project" value="RGD"/>
</dbReference>
<dbReference type="GO" id="GO:0010804">
    <property type="term" value="P:negative regulation of tumor necrosis factor-mediated signaling pathway"/>
    <property type="evidence" value="ECO:0000266"/>
    <property type="project" value="RGD"/>
</dbReference>
<dbReference type="GO" id="GO:0042119">
    <property type="term" value="P:neutrophil activation"/>
    <property type="evidence" value="ECO:0000250"/>
    <property type="project" value="UniProtKB"/>
</dbReference>
<dbReference type="GO" id="GO:0030836">
    <property type="term" value="P:positive regulation of actin filament depolymerization"/>
    <property type="evidence" value="ECO:0000266"/>
    <property type="project" value="RGD"/>
</dbReference>
<dbReference type="GO" id="GO:0043123">
    <property type="term" value="P:positive regulation of canonical NF-kappaB signal transduction"/>
    <property type="evidence" value="ECO:0000250"/>
    <property type="project" value="UniProtKB"/>
</dbReference>
<dbReference type="GO" id="GO:0030335">
    <property type="term" value="P:positive regulation of cell migration"/>
    <property type="evidence" value="ECO:0000250"/>
    <property type="project" value="UniProtKB"/>
</dbReference>
<dbReference type="GO" id="GO:0032722">
    <property type="term" value="P:positive regulation of chemokine production"/>
    <property type="evidence" value="ECO:0000250"/>
    <property type="project" value="UniProtKB"/>
</dbReference>
<dbReference type="GO" id="GO:0050921">
    <property type="term" value="P:positive regulation of chemotaxis"/>
    <property type="evidence" value="ECO:0000250"/>
    <property type="project" value="UniProtKB"/>
</dbReference>
<dbReference type="GO" id="GO:0002720">
    <property type="term" value="P:positive regulation of cytokine production involved in immune response"/>
    <property type="evidence" value="ECO:0000250"/>
    <property type="project" value="UniProtKB"/>
</dbReference>
<dbReference type="GO" id="GO:0007204">
    <property type="term" value="P:positive regulation of cytosolic calcium ion concentration"/>
    <property type="evidence" value="ECO:0000250"/>
    <property type="project" value="UniProtKB"/>
</dbReference>
<dbReference type="GO" id="GO:0043311">
    <property type="term" value="P:positive regulation of eosinophil degranulation"/>
    <property type="evidence" value="ECO:0000266"/>
    <property type="project" value="RGD"/>
</dbReference>
<dbReference type="GO" id="GO:0070374">
    <property type="term" value="P:positive regulation of ERK1 and ERK2 cascade"/>
    <property type="evidence" value="ECO:0000250"/>
    <property type="project" value="UniProtKB"/>
</dbReference>
<dbReference type="GO" id="GO:0003104">
    <property type="term" value="P:positive regulation of glomerular filtration"/>
    <property type="evidence" value="ECO:0000314"/>
    <property type="project" value="UniProtKB"/>
</dbReference>
<dbReference type="GO" id="GO:0032731">
    <property type="term" value="P:positive regulation of interleukin-1 beta production"/>
    <property type="evidence" value="ECO:0000250"/>
    <property type="project" value="UniProtKB"/>
</dbReference>
<dbReference type="GO" id="GO:0032733">
    <property type="term" value="P:positive regulation of interleukin-10 production"/>
    <property type="evidence" value="ECO:0000250"/>
    <property type="project" value="UniProtKB"/>
</dbReference>
<dbReference type="GO" id="GO:0032755">
    <property type="term" value="P:positive regulation of interleukin-6 production"/>
    <property type="evidence" value="ECO:0000250"/>
    <property type="project" value="UniProtKB"/>
</dbReference>
<dbReference type="GO" id="GO:0032757">
    <property type="term" value="P:positive regulation of interleukin-8 production"/>
    <property type="evidence" value="ECO:0000250"/>
    <property type="project" value="UniProtKB"/>
</dbReference>
<dbReference type="GO" id="GO:0046330">
    <property type="term" value="P:positive regulation of JNK cascade"/>
    <property type="evidence" value="ECO:0000266"/>
    <property type="project" value="RGD"/>
</dbReference>
<dbReference type="GO" id="GO:0002690">
    <property type="term" value="P:positive regulation of leukocyte chemotaxis"/>
    <property type="evidence" value="ECO:0000266"/>
    <property type="project" value="RGD"/>
</dbReference>
<dbReference type="GO" id="GO:0070963">
    <property type="term" value="P:positive regulation of neutrophil mediated killing of gram-negative bacterium"/>
    <property type="evidence" value="ECO:0000266"/>
    <property type="project" value="RGD"/>
</dbReference>
<dbReference type="GO" id="GO:0060100">
    <property type="term" value="P:positive regulation of phagocytosis, engulfment"/>
    <property type="evidence" value="ECO:0000266"/>
    <property type="project" value="RGD"/>
</dbReference>
<dbReference type="GO" id="GO:0051897">
    <property type="term" value="P:positive regulation of phosphatidylinositol 3-kinase/protein kinase B signal transduction"/>
    <property type="evidence" value="ECO:0000250"/>
    <property type="project" value="UniProtKB"/>
</dbReference>
<dbReference type="GO" id="GO:0050927">
    <property type="term" value="P:positive regulation of positive chemotaxis"/>
    <property type="evidence" value="ECO:0000266"/>
    <property type="project" value="RGD"/>
</dbReference>
<dbReference type="GO" id="GO:0031274">
    <property type="term" value="P:positive regulation of pseudopodium assembly"/>
    <property type="evidence" value="ECO:0000250"/>
    <property type="project" value="UniProtKB"/>
</dbReference>
<dbReference type="GO" id="GO:1900135">
    <property type="term" value="P:positive regulation of renin secretion into blood stream"/>
    <property type="evidence" value="ECO:0000250"/>
    <property type="project" value="UniProtKB"/>
</dbReference>
<dbReference type="GO" id="GO:0035025">
    <property type="term" value="P:positive regulation of Rho protein signal transduction"/>
    <property type="evidence" value="ECO:0000250"/>
    <property type="project" value="UniProtKB"/>
</dbReference>
<dbReference type="GO" id="GO:0032930">
    <property type="term" value="P:positive regulation of superoxide anion generation"/>
    <property type="evidence" value="ECO:0000250"/>
    <property type="project" value="UniProtKB"/>
</dbReference>
<dbReference type="GO" id="GO:0034137">
    <property type="term" value="P:positive regulation of toll-like receptor 2 signaling pathway"/>
    <property type="evidence" value="ECO:0000266"/>
    <property type="project" value="RGD"/>
</dbReference>
<dbReference type="GO" id="GO:0034141">
    <property type="term" value="P:positive regulation of toll-like receptor 3 signaling pathway"/>
    <property type="evidence" value="ECO:0000266"/>
    <property type="project" value="RGD"/>
</dbReference>
<dbReference type="GO" id="GO:0034145">
    <property type="term" value="P:positive regulation of toll-like receptor 4 signaling pathway"/>
    <property type="evidence" value="ECO:0000266"/>
    <property type="project" value="RGD"/>
</dbReference>
<dbReference type="GO" id="GO:0045944">
    <property type="term" value="P:positive regulation of transcription by RNA polymerase II"/>
    <property type="evidence" value="ECO:0000266"/>
    <property type="project" value="RGD"/>
</dbReference>
<dbReference type="GO" id="GO:0032729">
    <property type="term" value="P:positive regulation of type II interferon production"/>
    <property type="evidence" value="ECO:0000250"/>
    <property type="project" value="UniProtKB"/>
</dbReference>
<dbReference type="GO" id="GO:0045907">
    <property type="term" value="P:positive regulation of vasoconstriction"/>
    <property type="evidence" value="ECO:0000266"/>
    <property type="project" value="RGD"/>
</dbReference>
<dbReference type="GO" id="GO:0030193">
    <property type="term" value="P:regulation of blood coagulation"/>
    <property type="evidence" value="ECO:0000266"/>
    <property type="project" value="RGD"/>
</dbReference>
<dbReference type="GO" id="GO:0043122">
    <property type="term" value="P:regulation of canonical NF-kappaB signal transduction"/>
    <property type="evidence" value="ECO:0000250"/>
    <property type="project" value="UniProtKB"/>
</dbReference>
<dbReference type="GO" id="GO:2000341">
    <property type="term" value="P:regulation of chemokine (C-X-C motif) ligand 2 production"/>
    <property type="evidence" value="ECO:0000250"/>
    <property type="project" value="UniProtKB"/>
</dbReference>
<dbReference type="GO" id="GO:0046328">
    <property type="term" value="P:regulation of JNK cascade"/>
    <property type="evidence" value="ECO:0000250"/>
    <property type="project" value="UniProtKB"/>
</dbReference>
<dbReference type="GO" id="GO:0002286">
    <property type="term" value="P:T cell activation involved in immune response"/>
    <property type="evidence" value="ECO:0000250"/>
    <property type="project" value="UniProtKB"/>
</dbReference>
<dbReference type="GO" id="GO:0042311">
    <property type="term" value="P:vasodilation"/>
    <property type="evidence" value="ECO:0000314"/>
    <property type="project" value="GO_Central"/>
</dbReference>
<dbReference type="FunFam" id="1.20.1070.10:FF:000040">
    <property type="entry name" value="Coagulation factor 2 (thrombin) receptor"/>
    <property type="match status" value="1"/>
</dbReference>
<dbReference type="Gene3D" id="1.20.1070.10">
    <property type="entry name" value="Rhodopsin 7-helix transmembrane proteins"/>
    <property type="match status" value="1"/>
</dbReference>
<dbReference type="InterPro" id="IPR000276">
    <property type="entry name" value="GPCR_Rhodpsn"/>
</dbReference>
<dbReference type="InterPro" id="IPR017452">
    <property type="entry name" value="GPCR_Rhodpsn_7TM"/>
</dbReference>
<dbReference type="InterPro" id="IPR002281">
    <property type="entry name" value="Pro_rcpt_2"/>
</dbReference>
<dbReference type="InterPro" id="IPR003912">
    <property type="entry name" value="Protea_act_rcpt"/>
</dbReference>
<dbReference type="PANTHER" id="PTHR24232">
    <property type="entry name" value="G-PROTEIN COUPLED RECEPTOR"/>
    <property type="match status" value="1"/>
</dbReference>
<dbReference type="PANTHER" id="PTHR24232:SF21">
    <property type="entry name" value="PROTEINASE-ACTIVATED RECEPTOR 2"/>
    <property type="match status" value="1"/>
</dbReference>
<dbReference type="Pfam" id="PF00001">
    <property type="entry name" value="7tm_1"/>
    <property type="match status" value="1"/>
</dbReference>
<dbReference type="PRINTS" id="PR00237">
    <property type="entry name" value="GPCRRHODOPSN"/>
</dbReference>
<dbReference type="PRINTS" id="PR01428">
    <property type="entry name" value="PROTEASEAR"/>
</dbReference>
<dbReference type="PRINTS" id="PR01152">
    <property type="entry name" value="PROTEASEAR2"/>
</dbReference>
<dbReference type="SUPFAM" id="SSF81321">
    <property type="entry name" value="Family A G protein-coupled receptor-like"/>
    <property type="match status" value="1"/>
</dbReference>
<dbReference type="PROSITE" id="PS50262">
    <property type="entry name" value="G_PROTEIN_RECEP_F1_2"/>
    <property type="match status" value="1"/>
</dbReference>
<comment type="function">
    <text evidence="2 3 6">Receptor for trypsin and trypsin-like enzymes coupled to G proteins. Its function is mediated through the activation of several signaling pathways including phospholipase C (PLC), intracellular calcium, mitogen-activated protein kinase (MAPK), I-kappaB kinase/NF-kappaB and Rho. Can also be transactivated by cleaved F2R/PAR1. Involved in modulation of inflammatory responses and regulation of innate and adaptive immunity, and acts as a sensor for proteolytic enzymes generated during infection. Generally is promoting inflammation. Can signal synergistically with TLR4 and probably TLR2 in inflammatory responses and modulates Tlr3 signaling. Has a protective role in establishing the endothelial barrier; the activity involves coagulation factor X. Regulates endothelial cell barrier integrity during neutrophil extravasation, probably following proteolytic cleavage by PRTN3 (By similarity). Proposed to have a bronchoprotective role in airway epithelium, but also shown to compromise the airway epithelial barrier by interrupting E-cadherin adhesion. Involved in the regulation of vascular tone; activation results in hypotension presumably mediated by vasodilation. Associates with a subset of G proteins alpha subunits such as GNAQ, GNA11, GNA14, GNA12 and GNA13, but probably not with G(o)-alpha, G(i) subunit alpha-1 and G(i) subunit alpha-2. Believed to be a class B receptor which internalizes as a complex with arrestin and traffic with it to endosomal vesicles, presumably as desensitized receptor, for extended periods of time. Mediates inhibition of TNF-alpha stimulated JNK phosphorylation via coupling to G GNAQ and GNA11; the function involves dissociation of RIPK1 and Tradd from TNFR1. Mediates phosphorylation of nuclear factor NF-kappa-B RELA subunit at 'Ser-536'; the function involves Ikbkb and is predominantly independent of G proteins. Involved in cellular migration. Involved in cytoskeletal rearrangement and chemotaxis through beta-arrestin-promoted scaffolds; the function is independent of GNAQ and GNA11 and involves promotion of cofilin dephosphorylation and actin filament severing. Induces redistribution of COPS5 from the plasma membrane to the cytosol and activation of the JNK cascade is mediated by Cops5. Involved in the recruitment of leukocytes to the sites of inflammation and is the major PAR receptor capable of modulating eosinophil function such as pro-inflammatory cytokine secretion, superoxide production and degranulation. During inflammation promotes dendritic cell maturation, trafficking to the lymph nodes and subsequent T-cell activation. Involved in antimicrobial response of innate immune cells; activation enhances phagocytosis of Gram-positive and killing of Gram-negative bacteria. Acts synergistically with interferon-gamma in enhancing antiviral responses (By similarity). Probably mediates activation of pro-inflammatory and pro-fibrotic responses in fibroblasts, triggered by coagulation factor Xa (F10) (By similarity). Probably mediates activation of barrier protective signaling responses in endothelial cells, triggered by coagulation factor Xa (F10) (By similarity).</text>
</comment>
<comment type="subunit">
    <text evidence="1">Interacts with TLR4, COPS5 and TMED2. Interacts with GNAQ, GNA11, GNA12, GNA13 and GNA14 (By similarity).</text>
</comment>
<comment type="interaction">
    <interactant intactId="EBI-4303358">
        <id>Q63645</id>
    </interactant>
    <interactant intactId="EBI-918600">
        <id>Q63524</id>
        <label>Tmed2</label>
    </interactant>
    <organismsDiffer>false</organismsDiffer>
    <experiments>2</experiments>
</comment>
<comment type="subcellular location">
    <subcellularLocation>
        <location evidence="1">Cell membrane</location>
        <topology>Multi-pass membrane protein</topology>
    </subcellularLocation>
</comment>
<comment type="PTM">
    <text evidence="2">A proteolytic cleavage generates a new N-terminus that functions as a tethered ligand. Activating serine proteases include trypsin, mast cell tryptase, coagulation factors VII and Xa, myeloblastin/PRTN3 and membrane-type serine protease 1/ST14. Proposed subsequent cleavage by serine proteases is leading to receptor deactivation and include neutrophil elastase and cathepsin G. At least in part, implicated proteases are also shown to activate the receptor; the glycosylation status of the receptor is thought to contribute to the difference.</text>
</comment>
<comment type="PTM">
    <text evidence="2">N-glycosylated and sialylated.</text>
</comment>
<comment type="PTM">
    <text>Multiple phosphorylated on serine and threonine residues in the cytoplasmic region upon receptor activation; required for receptor desensitization and recruitment of beta-arrestin.</text>
</comment>
<comment type="PTM">
    <text evidence="1">Monoubiquitinated by Cbl at the plasma membrane and in early endosomes; not required for receptor endocytosis but for translocation to late endosomes or lysosomes. Deubiquitination involves Stambp and Usp8; required for lysosomal trafficking and receptor degradation (By similarity).</text>
</comment>
<comment type="miscellaneous">
    <text evidence="1">Synthetic PAR agonist peptides (APs) that mimic the first six amino acids of the newly formed N-terminus activate the native, uncleaved receptor nonenzymatically by binding directly to the corresponding second extracellular loop to mediate signaling.</text>
</comment>
<comment type="similarity">
    <text evidence="5">Belongs to the G-protein coupled receptor 1 family.</text>
</comment>
<accession>Q63645</accession>
<accession>Q499T9</accession>
<keyword id="KW-1003">Cell membrane</keyword>
<keyword id="KW-1015">Disulfide bond</keyword>
<keyword id="KW-0297">G-protein coupled receptor</keyword>
<keyword id="KW-0325">Glycoprotein</keyword>
<keyword id="KW-0391">Immunity</keyword>
<keyword id="KW-0395">Inflammatory response</keyword>
<keyword id="KW-0399">Innate immunity</keyword>
<keyword id="KW-0449">Lipoprotein</keyword>
<keyword id="KW-0472">Membrane</keyword>
<keyword id="KW-0564">Palmitate</keyword>
<keyword id="KW-0597">Phosphoprotein</keyword>
<keyword id="KW-0675">Receptor</keyword>
<keyword id="KW-1185">Reference proteome</keyword>
<keyword id="KW-0732">Signal</keyword>
<keyword id="KW-0807">Transducer</keyword>
<keyword id="KW-0812">Transmembrane</keyword>
<keyword id="KW-1133">Transmembrane helix</keyword>
<keyword id="KW-0832">Ubl conjugation</keyword>
<proteinExistence type="evidence at protein level"/>
<gene>
    <name type="primary">F2rl1</name>
    <name type="synonym">Par2</name>
</gene>
<sequence>MRSLSLAWLLGGITLLAASASCNRTVNAPGPNSKGRSLIGRLDTPPPITGKGAPVEPGFSVDEFSASVLTGKLTTVFLPVIYIIVFVIGLPSNGMALWVFFFRTKKKHPAVIYMANLALADLLSVIWFPLKISYHLHGNDWTYGDALCKVLIGFFYGNMYCSILFMTCLSVQRYWVIVNPMGHSRKRANIAVGVSLAIWLLIFLVTIPLYVMRQTIYIPALNITTCHDVLPEEVLVGDMFSYFLSLAIGVFLFPALLTASAYVLMIKTLRSSAMDEHSEKKRRRAIRLIITVLSMYFICFAPSNVLLVVHYFLIKSQRQSHVYALYLVALCLSTLNSCIDPFVYYFVSKDFRDQARNALLCRSVRTVKRMQISLTSNKFSRKSSSYSSSSTSVKTSY</sequence>
<feature type="signal peptide" evidence="4">
    <location>
        <begin position="1"/>
        <end position="25"/>
    </location>
</feature>
<feature type="propeptide" id="PRO_0000012754" description="Removed for receptor activation" evidence="1">
    <location>
        <begin position="26"/>
        <end position="36"/>
    </location>
</feature>
<feature type="chain" id="PRO_0000012755" description="Proteinase-activated receptor 2">
    <location>
        <begin position="37"/>
        <end position="397"/>
    </location>
</feature>
<feature type="topological domain" description="Extracellular" evidence="2">
    <location>
        <begin position="37"/>
        <end position="71"/>
    </location>
</feature>
<feature type="transmembrane region" description="Helical; Name=1" evidence="2">
    <location>
        <begin position="72"/>
        <end position="101"/>
    </location>
</feature>
<feature type="topological domain" description="Cytoplasmic" evidence="2">
    <location>
        <begin position="102"/>
        <end position="108"/>
    </location>
</feature>
<feature type="transmembrane region" description="Helical; Name=2" evidence="2">
    <location>
        <begin position="109"/>
        <end position="137"/>
    </location>
</feature>
<feature type="topological domain" description="Extracellular" evidence="2">
    <location>
        <begin position="138"/>
        <end position="149"/>
    </location>
</feature>
<feature type="transmembrane region" description="Helical; Name=3" evidence="2">
    <location>
        <begin position="150"/>
        <end position="177"/>
    </location>
</feature>
<feature type="topological domain" description="Cytoplasmic" evidence="2">
    <location>
        <begin position="178"/>
        <end position="183"/>
    </location>
</feature>
<feature type="transmembrane region" description="Helical; Name=4" evidence="2">
    <location>
        <begin position="184"/>
        <end position="211"/>
    </location>
</feature>
<feature type="topological domain" description="Extracellular" evidence="2">
    <location>
        <begin position="212"/>
        <end position="235"/>
    </location>
</feature>
<feature type="transmembrane region" description="Helical; Name=5" evidence="2">
    <location>
        <begin position="236"/>
        <end position="269"/>
    </location>
</feature>
<feature type="topological domain" description="Cytoplasmic" evidence="2">
    <location>
        <begin position="270"/>
        <end position="277"/>
    </location>
</feature>
<feature type="transmembrane region" description="Helical; Name=6" evidence="2">
    <location>
        <begin position="278"/>
        <end position="317"/>
    </location>
</feature>
<feature type="topological domain" description="Extracellular" evidence="2">
    <location>
        <begin position="318"/>
        <end position="323"/>
    </location>
</feature>
<feature type="transmembrane region" description="Helical; Name=7" evidence="2">
    <location>
        <begin position="324"/>
        <end position="347"/>
    </location>
</feature>
<feature type="topological domain" description="Cytoplasmic" evidence="2">
    <location>
        <begin position="348"/>
        <end position="397"/>
    </location>
</feature>
<feature type="site" description="Cleavage; by trypsin" evidence="1">
    <location>
        <begin position="36"/>
        <end position="37"/>
    </location>
</feature>
<feature type="lipid moiety-binding region" description="S-palmitoyl cysteine" evidence="1">
    <location>
        <position position="361"/>
    </location>
</feature>
<feature type="glycosylation site" description="N-linked (GlcNAc...) asparagine" evidence="4">
    <location>
        <position position="23"/>
    </location>
</feature>
<feature type="glycosylation site" description="N-linked (GlcNAc...) asparagine" evidence="4">
    <location>
        <position position="222"/>
    </location>
</feature>
<feature type="disulfide bond" evidence="5">
    <location>
        <begin position="148"/>
        <end position="226"/>
    </location>
</feature>
<name>PAR2_RAT</name>
<evidence type="ECO:0000250" key="1"/>
<evidence type="ECO:0000250" key="2">
    <source>
        <dbReference type="UniProtKB" id="P55085"/>
    </source>
</evidence>
<evidence type="ECO:0000250" key="3">
    <source>
        <dbReference type="UniProtKB" id="P55086"/>
    </source>
</evidence>
<evidence type="ECO:0000255" key="4"/>
<evidence type="ECO:0000255" key="5">
    <source>
        <dbReference type="PROSITE-ProRule" id="PRU00521"/>
    </source>
</evidence>
<evidence type="ECO:0000269" key="6">
    <source>
    </source>
</evidence>